<sequence>MATNAKPVYQRILLKLSGEALQGAEGFGIDASVLDRMAQEVKELVELGIQVGVVIGGGNLFRGAGLAQAGMNRVVGDHMGMLATVMNGLAMRDALHRAYVNARLMSAIPLNGVCDNYSWAEAISLLRHNRVVIFAAGTGNPFFTTDSAACLRGIEIEADVVLKATKVDGVYSADPVKNPDATLYEQLTYQDVLEQELKVMDLAAFTLARDHNLPIRVFNMNKPGALRRVVMGENEGTLIAK</sequence>
<comment type="function">
    <text evidence="1">Catalyzes the reversible phosphorylation of UMP to UDP.</text>
</comment>
<comment type="catalytic activity">
    <reaction evidence="1">
        <text>UMP + ATP = UDP + ADP</text>
        <dbReference type="Rhea" id="RHEA:24400"/>
        <dbReference type="ChEBI" id="CHEBI:30616"/>
        <dbReference type="ChEBI" id="CHEBI:57865"/>
        <dbReference type="ChEBI" id="CHEBI:58223"/>
        <dbReference type="ChEBI" id="CHEBI:456216"/>
        <dbReference type="EC" id="2.7.4.22"/>
    </reaction>
</comment>
<comment type="activity regulation">
    <text evidence="1">Allosterically activated by GTP. Inhibited by UTP.</text>
</comment>
<comment type="pathway">
    <text evidence="1">Pyrimidine metabolism; CTP biosynthesis via de novo pathway; UDP from UMP (UMPK route): step 1/1.</text>
</comment>
<comment type="subunit">
    <text evidence="1">Homohexamer.</text>
</comment>
<comment type="subcellular location">
    <subcellularLocation>
        <location evidence="1">Cytoplasm</location>
    </subcellularLocation>
</comment>
<comment type="similarity">
    <text evidence="1">Belongs to the UMP kinase family.</text>
</comment>
<feature type="chain" id="PRO_0000143911" description="Uridylate kinase">
    <location>
        <begin position="1"/>
        <end position="241"/>
    </location>
</feature>
<feature type="region of interest" description="Involved in allosteric activation by GTP" evidence="1">
    <location>
        <begin position="23"/>
        <end position="28"/>
    </location>
</feature>
<feature type="binding site" evidence="1">
    <location>
        <begin position="15"/>
        <end position="18"/>
    </location>
    <ligand>
        <name>ATP</name>
        <dbReference type="ChEBI" id="CHEBI:30616"/>
    </ligand>
</feature>
<feature type="binding site" evidence="1">
    <location>
        <position position="57"/>
    </location>
    <ligand>
        <name>UMP</name>
        <dbReference type="ChEBI" id="CHEBI:57865"/>
    </ligand>
</feature>
<feature type="binding site" evidence="1">
    <location>
        <position position="58"/>
    </location>
    <ligand>
        <name>ATP</name>
        <dbReference type="ChEBI" id="CHEBI:30616"/>
    </ligand>
</feature>
<feature type="binding site" evidence="1">
    <location>
        <position position="62"/>
    </location>
    <ligand>
        <name>ATP</name>
        <dbReference type="ChEBI" id="CHEBI:30616"/>
    </ligand>
</feature>
<feature type="binding site" evidence="1">
    <location>
        <position position="77"/>
    </location>
    <ligand>
        <name>UMP</name>
        <dbReference type="ChEBI" id="CHEBI:57865"/>
    </ligand>
</feature>
<feature type="binding site" evidence="1">
    <location>
        <begin position="138"/>
        <end position="145"/>
    </location>
    <ligand>
        <name>UMP</name>
        <dbReference type="ChEBI" id="CHEBI:57865"/>
    </ligand>
</feature>
<feature type="binding site" evidence="1">
    <location>
        <position position="165"/>
    </location>
    <ligand>
        <name>ATP</name>
        <dbReference type="ChEBI" id="CHEBI:30616"/>
    </ligand>
</feature>
<feature type="binding site" evidence="1">
    <location>
        <position position="171"/>
    </location>
    <ligand>
        <name>ATP</name>
        <dbReference type="ChEBI" id="CHEBI:30616"/>
    </ligand>
</feature>
<feature type="binding site" evidence="1">
    <location>
        <position position="174"/>
    </location>
    <ligand>
        <name>ATP</name>
        <dbReference type="ChEBI" id="CHEBI:30616"/>
    </ligand>
</feature>
<organism>
    <name type="scientific">Yersinia pestis</name>
    <dbReference type="NCBI Taxonomy" id="632"/>
    <lineage>
        <taxon>Bacteria</taxon>
        <taxon>Pseudomonadati</taxon>
        <taxon>Pseudomonadota</taxon>
        <taxon>Gammaproteobacteria</taxon>
        <taxon>Enterobacterales</taxon>
        <taxon>Yersiniaceae</taxon>
        <taxon>Yersinia</taxon>
    </lineage>
</organism>
<proteinExistence type="inferred from homology"/>
<keyword id="KW-0021">Allosteric enzyme</keyword>
<keyword id="KW-0067">ATP-binding</keyword>
<keyword id="KW-0963">Cytoplasm</keyword>
<keyword id="KW-0418">Kinase</keyword>
<keyword id="KW-0547">Nucleotide-binding</keyword>
<keyword id="KW-0665">Pyrimidine biosynthesis</keyword>
<keyword id="KW-1185">Reference proteome</keyword>
<keyword id="KW-0808">Transferase</keyword>
<reference key="1">
    <citation type="journal article" date="2001" name="Nature">
        <title>Genome sequence of Yersinia pestis, the causative agent of plague.</title>
        <authorList>
            <person name="Parkhill J."/>
            <person name="Wren B.W."/>
            <person name="Thomson N.R."/>
            <person name="Titball R.W."/>
            <person name="Holden M.T.G."/>
            <person name="Prentice M.B."/>
            <person name="Sebaihia M."/>
            <person name="James K.D."/>
            <person name="Churcher C.M."/>
            <person name="Mungall K.L."/>
            <person name="Baker S."/>
            <person name="Basham D."/>
            <person name="Bentley S.D."/>
            <person name="Brooks K."/>
            <person name="Cerdeno-Tarraga A.-M."/>
            <person name="Chillingworth T."/>
            <person name="Cronin A."/>
            <person name="Davies R.M."/>
            <person name="Davis P."/>
            <person name="Dougan G."/>
            <person name="Feltwell T."/>
            <person name="Hamlin N."/>
            <person name="Holroyd S."/>
            <person name="Jagels K."/>
            <person name="Karlyshev A.V."/>
            <person name="Leather S."/>
            <person name="Moule S."/>
            <person name="Oyston P.C.F."/>
            <person name="Quail M.A."/>
            <person name="Rutherford K.M."/>
            <person name="Simmonds M."/>
            <person name="Skelton J."/>
            <person name="Stevens K."/>
            <person name="Whitehead S."/>
            <person name="Barrell B.G."/>
        </authorList>
    </citation>
    <scope>NUCLEOTIDE SEQUENCE [LARGE SCALE GENOMIC DNA]</scope>
    <source>
        <strain>CO-92 / Biovar Orientalis</strain>
    </source>
</reference>
<reference key="2">
    <citation type="journal article" date="2002" name="J. Bacteriol.">
        <title>Genome sequence of Yersinia pestis KIM.</title>
        <authorList>
            <person name="Deng W."/>
            <person name="Burland V."/>
            <person name="Plunkett G. III"/>
            <person name="Boutin A."/>
            <person name="Mayhew G.F."/>
            <person name="Liss P."/>
            <person name="Perna N.T."/>
            <person name="Rose D.J."/>
            <person name="Mau B."/>
            <person name="Zhou S."/>
            <person name="Schwartz D.C."/>
            <person name="Fetherston J.D."/>
            <person name="Lindler L.E."/>
            <person name="Brubaker R.R."/>
            <person name="Plano G.V."/>
            <person name="Straley S.C."/>
            <person name="McDonough K.A."/>
            <person name="Nilles M.L."/>
            <person name="Matson J.S."/>
            <person name="Blattner F.R."/>
            <person name="Perry R.D."/>
        </authorList>
    </citation>
    <scope>NUCLEOTIDE SEQUENCE [LARGE SCALE GENOMIC DNA]</scope>
    <source>
        <strain>KIM10+ / Biovar Mediaevalis</strain>
    </source>
</reference>
<reference key="3">
    <citation type="journal article" date="2004" name="DNA Res.">
        <title>Complete genome sequence of Yersinia pestis strain 91001, an isolate avirulent to humans.</title>
        <authorList>
            <person name="Song Y."/>
            <person name="Tong Z."/>
            <person name="Wang J."/>
            <person name="Wang L."/>
            <person name="Guo Z."/>
            <person name="Han Y."/>
            <person name="Zhang J."/>
            <person name="Pei D."/>
            <person name="Zhou D."/>
            <person name="Qin H."/>
            <person name="Pang X."/>
            <person name="Han Y."/>
            <person name="Zhai J."/>
            <person name="Li M."/>
            <person name="Cui B."/>
            <person name="Qi Z."/>
            <person name="Jin L."/>
            <person name="Dai R."/>
            <person name="Chen F."/>
            <person name="Li S."/>
            <person name="Ye C."/>
            <person name="Du Z."/>
            <person name="Lin W."/>
            <person name="Wang J."/>
            <person name="Yu J."/>
            <person name="Yang H."/>
            <person name="Wang J."/>
            <person name="Huang P."/>
            <person name="Yang R."/>
        </authorList>
    </citation>
    <scope>NUCLEOTIDE SEQUENCE [LARGE SCALE GENOMIC DNA]</scope>
    <source>
        <strain>91001 / Biovar Mediaevalis</strain>
    </source>
</reference>
<accession>Q8ZH64</accession>
<accession>Q0WHZ9</accession>
<gene>
    <name evidence="1" type="primary">pyrH</name>
    <name type="ordered locus">YPO1046</name>
    <name type="ordered locus">y3134</name>
    <name type="ordered locus">YP_2805</name>
</gene>
<dbReference type="EC" id="2.7.4.22" evidence="1"/>
<dbReference type="EMBL" id="AL590842">
    <property type="protein sequence ID" value="CAL19711.1"/>
    <property type="molecule type" value="Genomic_DNA"/>
</dbReference>
<dbReference type="EMBL" id="AE009952">
    <property type="protein sequence ID" value="AAM86684.1"/>
    <property type="molecule type" value="Genomic_DNA"/>
</dbReference>
<dbReference type="EMBL" id="AE017042">
    <property type="protein sequence ID" value="AAS62989.1"/>
    <property type="molecule type" value="Genomic_DNA"/>
</dbReference>
<dbReference type="PIR" id="AE0128">
    <property type="entry name" value="AE0128"/>
</dbReference>
<dbReference type="RefSeq" id="WP_002212133.1">
    <property type="nucleotide sequence ID" value="NZ_WUCM01000044.1"/>
</dbReference>
<dbReference type="RefSeq" id="YP_002346089.1">
    <property type="nucleotide sequence ID" value="NC_003143.1"/>
</dbReference>
<dbReference type="SMR" id="Q8ZH64"/>
<dbReference type="STRING" id="214092.YPO1046"/>
<dbReference type="PaxDb" id="214092-YPO1046"/>
<dbReference type="DNASU" id="1148081"/>
<dbReference type="EnsemblBacteria" id="AAS62989">
    <property type="protein sequence ID" value="AAS62989"/>
    <property type="gene ID" value="YP_2805"/>
</dbReference>
<dbReference type="GeneID" id="96662368"/>
<dbReference type="KEGG" id="ype:YPO1046"/>
<dbReference type="KEGG" id="ypk:y3134"/>
<dbReference type="KEGG" id="ypm:YP_2805"/>
<dbReference type="PATRIC" id="fig|214092.21.peg.1334"/>
<dbReference type="eggNOG" id="COG0528">
    <property type="taxonomic scope" value="Bacteria"/>
</dbReference>
<dbReference type="HOGENOM" id="CLU_033861_0_0_6"/>
<dbReference type="OMA" id="LMGDKQF"/>
<dbReference type="OrthoDB" id="9807458at2"/>
<dbReference type="UniPathway" id="UPA00159">
    <property type="reaction ID" value="UER00275"/>
</dbReference>
<dbReference type="Proteomes" id="UP000000815">
    <property type="component" value="Chromosome"/>
</dbReference>
<dbReference type="Proteomes" id="UP000001019">
    <property type="component" value="Chromosome"/>
</dbReference>
<dbReference type="Proteomes" id="UP000002490">
    <property type="component" value="Chromosome"/>
</dbReference>
<dbReference type="GO" id="GO:0005829">
    <property type="term" value="C:cytosol"/>
    <property type="evidence" value="ECO:0000318"/>
    <property type="project" value="GO_Central"/>
</dbReference>
<dbReference type="GO" id="GO:0005524">
    <property type="term" value="F:ATP binding"/>
    <property type="evidence" value="ECO:0007669"/>
    <property type="project" value="UniProtKB-KW"/>
</dbReference>
<dbReference type="GO" id="GO:0033862">
    <property type="term" value="F:UMP kinase activity"/>
    <property type="evidence" value="ECO:0000318"/>
    <property type="project" value="GO_Central"/>
</dbReference>
<dbReference type="GO" id="GO:0044210">
    <property type="term" value="P:'de novo' CTP biosynthetic process"/>
    <property type="evidence" value="ECO:0007669"/>
    <property type="project" value="UniProtKB-UniRule"/>
</dbReference>
<dbReference type="GO" id="GO:0006225">
    <property type="term" value="P:UDP biosynthetic process"/>
    <property type="evidence" value="ECO:0000318"/>
    <property type="project" value="GO_Central"/>
</dbReference>
<dbReference type="CDD" id="cd04254">
    <property type="entry name" value="AAK_UMPK-PyrH-Ec"/>
    <property type="match status" value="1"/>
</dbReference>
<dbReference type="FunFam" id="3.40.1160.10:FF:000001">
    <property type="entry name" value="Uridylate kinase"/>
    <property type="match status" value="1"/>
</dbReference>
<dbReference type="Gene3D" id="3.40.1160.10">
    <property type="entry name" value="Acetylglutamate kinase-like"/>
    <property type="match status" value="1"/>
</dbReference>
<dbReference type="HAMAP" id="MF_01220_B">
    <property type="entry name" value="PyrH_B"/>
    <property type="match status" value="1"/>
</dbReference>
<dbReference type="InterPro" id="IPR036393">
    <property type="entry name" value="AceGlu_kinase-like_sf"/>
</dbReference>
<dbReference type="InterPro" id="IPR001048">
    <property type="entry name" value="Asp/Glu/Uridylate_kinase"/>
</dbReference>
<dbReference type="InterPro" id="IPR011817">
    <property type="entry name" value="Uridylate_kinase"/>
</dbReference>
<dbReference type="InterPro" id="IPR015963">
    <property type="entry name" value="Uridylate_kinase_bac"/>
</dbReference>
<dbReference type="NCBIfam" id="TIGR02075">
    <property type="entry name" value="pyrH_bact"/>
    <property type="match status" value="1"/>
</dbReference>
<dbReference type="PANTHER" id="PTHR42833">
    <property type="entry name" value="URIDYLATE KINASE"/>
    <property type="match status" value="1"/>
</dbReference>
<dbReference type="PANTHER" id="PTHR42833:SF4">
    <property type="entry name" value="URIDYLATE KINASE PUMPKIN, CHLOROPLASTIC"/>
    <property type="match status" value="1"/>
</dbReference>
<dbReference type="Pfam" id="PF00696">
    <property type="entry name" value="AA_kinase"/>
    <property type="match status" value="1"/>
</dbReference>
<dbReference type="PIRSF" id="PIRSF005650">
    <property type="entry name" value="Uridylate_kin"/>
    <property type="match status" value="1"/>
</dbReference>
<dbReference type="SUPFAM" id="SSF53633">
    <property type="entry name" value="Carbamate kinase-like"/>
    <property type="match status" value="1"/>
</dbReference>
<evidence type="ECO:0000255" key="1">
    <source>
        <dbReference type="HAMAP-Rule" id="MF_01220"/>
    </source>
</evidence>
<protein>
    <recommendedName>
        <fullName evidence="1">Uridylate kinase</fullName>
        <shortName evidence="1">UK</shortName>
        <ecNumber evidence="1">2.7.4.22</ecNumber>
    </recommendedName>
    <alternativeName>
        <fullName evidence="1">Uridine monophosphate kinase</fullName>
        <shortName evidence="1">UMP kinase</shortName>
        <shortName evidence="1">UMPK</shortName>
    </alternativeName>
</protein>
<name>PYRH_YERPE</name>